<accession>P85262</accession>
<sequence>GKCGDINAPCTSACDCCGKSVECDCYWGKECSCRESFFGAATXL</sequence>
<protein>
    <recommendedName>
        <fullName evidence="4">U9-ctenitoxin-Co1a</fullName>
        <shortName evidence="4">U9-CNTX-Co1a</shortName>
    </recommendedName>
    <alternativeName>
        <fullName evidence="3">Neurotoxin Oc FU-18</fullName>
    </alternativeName>
</protein>
<name>TX35B_CTEON</name>
<feature type="chain" id="PRO_0000302109" description="U9-ctenitoxin-Co1a" evidence="5">
    <location>
        <begin position="1"/>
        <end position="44" status="greater than"/>
    </location>
</feature>
<feature type="disulfide bond" evidence="4">
    <location>
        <begin position="3"/>
        <end position="17"/>
    </location>
</feature>
<feature type="disulfide bond" evidence="4">
    <location>
        <begin position="10"/>
        <end position="23"/>
    </location>
</feature>
<feature type="disulfide bond" evidence="4">
    <location>
        <begin position="14"/>
        <end status="unknown"/>
    </location>
</feature>
<feature type="disulfide bond" evidence="4">
    <location>
        <begin position="16"/>
        <end position="33"/>
    </location>
</feature>
<feature type="disulfide bond" evidence="4">
    <location>
        <begin position="25"/>
        <end position="31"/>
    </location>
</feature>
<feature type="non-terminal residue" evidence="5">
    <location>
        <position position="44"/>
    </location>
</feature>
<proteinExistence type="evidence at protein level"/>
<comment type="function">
    <text evidence="1">Insecticidal neurotoxin that reversibly inhibits the N-methyl-D-aspartate (NMDA)-subtype of ionotropic glutamate receptor (GRIN) and inhibits inactivation of insect sodium channels (Nav). In vivo, is highly toxic to insects.</text>
</comment>
<comment type="subcellular location">
    <subcellularLocation>
        <location evidence="2">Secreted</location>
    </subcellularLocation>
</comment>
<comment type="tissue specificity">
    <text evidence="5">Expressed by the venom gland.</text>
</comment>
<comment type="domain">
    <text evidence="4">The presence of a 'disulfide through disulfide knot' structurally defines this protein as a knottin.</text>
</comment>
<comment type="mass spectrometry"/>
<comment type="similarity">
    <text evidence="4">Belongs to the neurotoxin 03 (Tx2) family. 05 subfamily.</text>
</comment>
<evidence type="ECO:0000250" key="1">
    <source>
        <dbReference type="UniProtKB" id="P59367"/>
    </source>
</evidence>
<evidence type="ECO:0000269" key="2">
    <source ref="1"/>
</evidence>
<evidence type="ECO:0000303" key="3">
    <source ref="1"/>
</evidence>
<evidence type="ECO:0000305" key="4"/>
<evidence type="ECO:0000305" key="5">
    <source ref="1"/>
</evidence>
<organism>
    <name type="scientific">Ctenus ornatus</name>
    <name type="common">Brazilian spider</name>
    <name type="synonym">Oligoctenus ornatus</name>
    <dbReference type="NCBI Taxonomy" id="406443"/>
    <lineage>
        <taxon>Eukaryota</taxon>
        <taxon>Metazoa</taxon>
        <taxon>Ecdysozoa</taxon>
        <taxon>Arthropoda</taxon>
        <taxon>Chelicerata</taxon>
        <taxon>Arachnida</taxon>
        <taxon>Araneae</taxon>
        <taxon>Araneomorphae</taxon>
        <taxon>Entelegynae</taxon>
        <taxon>Lycosoidea</taxon>
        <taxon>Ctenidae</taxon>
        <taxon>Oligoctenus</taxon>
    </lineage>
</organism>
<keyword id="KW-0903">Direct protein sequencing</keyword>
<keyword id="KW-1015">Disulfide bond</keyword>
<keyword id="KW-0872">Ion channel impairing toxin</keyword>
<keyword id="KW-1028">Ionotropic glutamate receptor inhibitor</keyword>
<keyword id="KW-0960">Knottin</keyword>
<keyword id="KW-0528">Neurotoxin</keyword>
<keyword id="KW-0629">Postsynaptic neurotoxin</keyword>
<keyword id="KW-0964">Secreted</keyword>
<keyword id="KW-0800">Toxin</keyword>
<keyword id="KW-0738">Voltage-gated sodium channel impairing toxin</keyword>
<dbReference type="ArachnoServer" id="AS000320">
    <property type="toxin name" value="U9-ctenitoxin-Co1a"/>
</dbReference>
<dbReference type="GO" id="GO:0005576">
    <property type="term" value="C:extracellular region"/>
    <property type="evidence" value="ECO:0007669"/>
    <property type="project" value="UniProtKB-SubCell"/>
</dbReference>
<dbReference type="GO" id="GO:0035792">
    <property type="term" value="C:host cell postsynaptic membrane"/>
    <property type="evidence" value="ECO:0007669"/>
    <property type="project" value="UniProtKB-KW"/>
</dbReference>
<dbReference type="GO" id="GO:0017080">
    <property type="term" value="F:sodium channel regulator activity"/>
    <property type="evidence" value="ECO:0007669"/>
    <property type="project" value="UniProtKB-KW"/>
</dbReference>
<dbReference type="GO" id="GO:0090729">
    <property type="term" value="F:toxin activity"/>
    <property type="evidence" value="ECO:0007669"/>
    <property type="project" value="UniProtKB-KW"/>
</dbReference>
<dbReference type="InterPro" id="IPR035285">
    <property type="entry name" value="CNTX"/>
</dbReference>
<dbReference type="Pfam" id="PF17492">
    <property type="entry name" value="D_CNTX"/>
    <property type="match status" value="1"/>
</dbReference>
<reference key="1">
    <citation type="submission" date="2007-07" db="UniProtKB">
        <authorList>
            <person name="Borges M.H."/>
            <person name="Oliveira C.F.B."/>
            <person name="Goncalves J.M."/>
            <person name="Rates B."/>
            <person name="Santos D.M."/>
            <person name="Pimenta A.M.C."/>
            <person name="Cordeiro M.N."/>
            <person name="Richardson M."/>
        </authorList>
    </citation>
    <scope>PROTEIN SEQUENCE</scope>
    <scope>SUBCELLULAR LOCATION</scope>
    <scope>MASS SPECTROMETRY</scope>
    <source>
        <tissue>Venom</tissue>
    </source>
</reference>